<comment type="function">
    <text evidence="2">One of the essential components for the initiation of protein synthesis. Protects formylmethionyl-tRNA from spontaneous hydrolysis and promotes its binding to the 30S ribosomal subunits. Also involved in the hydrolysis of GTP during the formation of the 70S ribosomal complex.</text>
</comment>
<comment type="subcellular location">
    <subcellularLocation>
        <location evidence="2">Cytoplasm</location>
    </subcellularLocation>
</comment>
<comment type="similarity">
    <text evidence="2">Belongs to the TRAFAC class translation factor GTPase superfamily. Classic translation factor GTPase family. IF-2 subfamily.</text>
</comment>
<gene>
    <name evidence="2" type="primary">infB</name>
    <name type="ordered locus">TT_C0347</name>
</gene>
<evidence type="ECO:0000250" key="1"/>
<evidence type="ECO:0000255" key="2">
    <source>
        <dbReference type="HAMAP-Rule" id="MF_00100"/>
    </source>
</evidence>
<proteinExistence type="inferred from homology"/>
<dbReference type="EMBL" id="AE017221">
    <property type="protein sequence ID" value="AAS80695.1"/>
    <property type="molecule type" value="Genomic_DNA"/>
</dbReference>
<dbReference type="RefSeq" id="WP_011172797.1">
    <property type="nucleotide sequence ID" value="NC_005835.1"/>
</dbReference>
<dbReference type="SMR" id="Q72KE8"/>
<dbReference type="GeneID" id="3168456"/>
<dbReference type="KEGG" id="tth:TT_C0347"/>
<dbReference type="eggNOG" id="COG0532">
    <property type="taxonomic scope" value="Bacteria"/>
</dbReference>
<dbReference type="HOGENOM" id="CLU_006301_5_1_0"/>
<dbReference type="OrthoDB" id="9811804at2"/>
<dbReference type="Proteomes" id="UP000000592">
    <property type="component" value="Chromosome"/>
</dbReference>
<dbReference type="GO" id="GO:0005829">
    <property type="term" value="C:cytosol"/>
    <property type="evidence" value="ECO:0007669"/>
    <property type="project" value="TreeGrafter"/>
</dbReference>
<dbReference type="GO" id="GO:0005525">
    <property type="term" value="F:GTP binding"/>
    <property type="evidence" value="ECO:0007669"/>
    <property type="project" value="UniProtKB-KW"/>
</dbReference>
<dbReference type="GO" id="GO:0003924">
    <property type="term" value="F:GTPase activity"/>
    <property type="evidence" value="ECO:0007669"/>
    <property type="project" value="UniProtKB-UniRule"/>
</dbReference>
<dbReference type="GO" id="GO:0003743">
    <property type="term" value="F:translation initiation factor activity"/>
    <property type="evidence" value="ECO:0007669"/>
    <property type="project" value="UniProtKB-UniRule"/>
</dbReference>
<dbReference type="CDD" id="cd01887">
    <property type="entry name" value="IF2_eIF5B"/>
    <property type="match status" value="1"/>
</dbReference>
<dbReference type="CDD" id="cd03702">
    <property type="entry name" value="IF2_mtIF2_II"/>
    <property type="match status" value="1"/>
</dbReference>
<dbReference type="CDD" id="cd03692">
    <property type="entry name" value="mtIF2_IVc"/>
    <property type="match status" value="1"/>
</dbReference>
<dbReference type="FunFam" id="2.40.30.10:FF:000008">
    <property type="entry name" value="Translation initiation factor IF-2"/>
    <property type="match status" value="1"/>
</dbReference>
<dbReference type="FunFam" id="2.40.30.10:FF:000054">
    <property type="entry name" value="Translation initiation factor IF-2"/>
    <property type="match status" value="1"/>
</dbReference>
<dbReference type="FunFam" id="3.40.50.10050:FF:000001">
    <property type="entry name" value="Translation initiation factor IF-2"/>
    <property type="match status" value="1"/>
</dbReference>
<dbReference type="FunFam" id="3.40.50.300:FF:000019">
    <property type="entry name" value="Translation initiation factor IF-2"/>
    <property type="match status" value="1"/>
</dbReference>
<dbReference type="Gene3D" id="1.10.10.2480">
    <property type="match status" value="1"/>
</dbReference>
<dbReference type="Gene3D" id="3.40.50.300">
    <property type="entry name" value="P-loop containing nucleotide triphosphate hydrolases"/>
    <property type="match status" value="1"/>
</dbReference>
<dbReference type="Gene3D" id="2.40.30.10">
    <property type="entry name" value="Translation factors"/>
    <property type="match status" value="2"/>
</dbReference>
<dbReference type="Gene3D" id="3.40.50.10050">
    <property type="entry name" value="Translation initiation factor IF- 2, domain 3"/>
    <property type="match status" value="1"/>
</dbReference>
<dbReference type="HAMAP" id="MF_00100_B">
    <property type="entry name" value="IF_2_B"/>
    <property type="match status" value="1"/>
</dbReference>
<dbReference type="InterPro" id="IPR053905">
    <property type="entry name" value="EF-G-like_DII"/>
</dbReference>
<dbReference type="InterPro" id="IPR004161">
    <property type="entry name" value="EFTu-like_2"/>
</dbReference>
<dbReference type="InterPro" id="IPR044145">
    <property type="entry name" value="IF2_II"/>
</dbReference>
<dbReference type="InterPro" id="IPR006847">
    <property type="entry name" value="IF2_N"/>
</dbReference>
<dbReference type="InterPro" id="IPR027417">
    <property type="entry name" value="P-loop_NTPase"/>
</dbReference>
<dbReference type="InterPro" id="IPR005225">
    <property type="entry name" value="Small_GTP-bd"/>
</dbReference>
<dbReference type="InterPro" id="IPR000795">
    <property type="entry name" value="T_Tr_GTP-bd_dom"/>
</dbReference>
<dbReference type="InterPro" id="IPR000178">
    <property type="entry name" value="TF_IF2_bacterial-like"/>
</dbReference>
<dbReference type="InterPro" id="IPR015760">
    <property type="entry name" value="TIF_IF2"/>
</dbReference>
<dbReference type="InterPro" id="IPR023115">
    <property type="entry name" value="TIF_IF2_dom3"/>
</dbReference>
<dbReference type="InterPro" id="IPR036925">
    <property type="entry name" value="TIF_IF2_dom3_sf"/>
</dbReference>
<dbReference type="InterPro" id="IPR009000">
    <property type="entry name" value="Transl_B-barrel_sf"/>
</dbReference>
<dbReference type="NCBIfam" id="TIGR00487">
    <property type="entry name" value="IF-2"/>
    <property type="match status" value="1"/>
</dbReference>
<dbReference type="NCBIfam" id="TIGR00231">
    <property type="entry name" value="small_GTP"/>
    <property type="match status" value="1"/>
</dbReference>
<dbReference type="PANTHER" id="PTHR43381:SF5">
    <property type="entry name" value="TR-TYPE G DOMAIN-CONTAINING PROTEIN"/>
    <property type="match status" value="1"/>
</dbReference>
<dbReference type="PANTHER" id="PTHR43381">
    <property type="entry name" value="TRANSLATION INITIATION FACTOR IF-2-RELATED"/>
    <property type="match status" value="1"/>
</dbReference>
<dbReference type="Pfam" id="PF22042">
    <property type="entry name" value="EF-G_D2"/>
    <property type="match status" value="1"/>
</dbReference>
<dbReference type="Pfam" id="PF00009">
    <property type="entry name" value="GTP_EFTU"/>
    <property type="match status" value="1"/>
</dbReference>
<dbReference type="Pfam" id="PF03144">
    <property type="entry name" value="GTP_EFTU_D2"/>
    <property type="match status" value="1"/>
</dbReference>
<dbReference type="Pfam" id="PF11987">
    <property type="entry name" value="IF-2"/>
    <property type="match status" value="1"/>
</dbReference>
<dbReference type="Pfam" id="PF04760">
    <property type="entry name" value="IF2_N"/>
    <property type="match status" value="1"/>
</dbReference>
<dbReference type="SUPFAM" id="SSF52156">
    <property type="entry name" value="Initiation factor IF2/eIF5b, domain 3"/>
    <property type="match status" value="1"/>
</dbReference>
<dbReference type="SUPFAM" id="SSF52540">
    <property type="entry name" value="P-loop containing nucleoside triphosphate hydrolases"/>
    <property type="match status" value="1"/>
</dbReference>
<dbReference type="SUPFAM" id="SSF50447">
    <property type="entry name" value="Translation proteins"/>
    <property type="match status" value="2"/>
</dbReference>
<dbReference type="PROSITE" id="PS51722">
    <property type="entry name" value="G_TR_2"/>
    <property type="match status" value="1"/>
</dbReference>
<dbReference type="PROSITE" id="PS01176">
    <property type="entry name" value="IF2"/>
    <property type="match status" value="1"/>
</dbReference>
<keyword id="KW-0963">Cytoplasm</keyword>
<keyword id="KW-0342">GTP-binding</keyword>
<keyword id="KW-0396">Initiation factor</keyword>
<keyword id="KW-0547">Nucleotide-binding</keyword>
<keyword id="KW-0648">Protein biosynthesis</keyword>
<sequence length="571" mass="63178">MAKVRIYQLAKELGMETQELLELLDQMGVAYKSHASTLEEKDAEAVRELVKEQRGLQEKLAEEERRKSLPRRPPVVVIMGHVDHGKTTLLDYLRKSRIAEKEAGGITQHVGAFEVKTPQGTVVFIDTPGHEAFTTIRQRGAKVADIAVIVIAADDGIMPQTEEAIAHAKAAGAKLIFAINKIDLPQADPEKVKRQLMERGFVPEEYGGDAIVIPISAKTGQGVQDLLEMILLLAELEDYRADPNAEPRGVILESKLDKQAGIIANMLVQEGTFRVGDYVVAGEAYGRIRAMMDADGNQRKEAGPGSAVQVLGFQELPHAGDVVEWVPDLEAAKEIAEERKEERKAREEEEKARRPRTMAELLRAMQEEGRKELNLILRADTQGSLEAIQHILARESTEDVKINILLAQVGAPTESDVLLAQTANAAILAFGVNPPGSVKKKAEEKGVLLKTFRIIYDLVDEVRNMVKGQREPQYKEEVLGQAEVRAIFRLPTGKQVAGCMVTQGRIPRNAEVRVLRDGQVIWQGRIASLKRFKEDVREVAQGYECGIGLDGFDDFREGDVIEAFQMVEVPA</sequence>
<feature type="chain" id="PRO_0000228255" description="Translation initiation factor IF-2">
    <location>
        <begin position="1"/>
        <end position="571"/>
    </location>
</feature>
<feature type="domain" description="tr-type G">
    <location>
        <begin position="71"/>
        <end position="239"/>
    </location>
</feature>
<feature type="region of interest" description="G1" evidence="1">
    <location>
        <begin position="80"/>
        <end position="87"/>
    </location>
</feature>
<feature type="region of interest" description="G2" evidence="1">
    <location>
        <begin position="105"/>
        <end position="109"/>
    </location>
</feature>
<feature type="region of interest" description="G3" evidence="1">
    <location>
        <begin position="126"/>
        <end position="129"/>
    </location>
</feature>
<feature type="region of interest" description="G4" evidence="1">
    <location>
        <begin position="180"/>
        <end position="183"/>
    </location>
</feature>
<feature type="region of interest" description="G5" evidence="1">
    <location>
        <begin position="216"/>
        <end position="218"/>
    </location>
</feature>
<feature type="binding site" evidence="2">
    <location>
        <begin position="80"/>
        <end position="87"/>
    </location>
    <ligand>
        <name>GTP</name>
        <dbReference type="ChEBI" id="CHEBI:37565"/>
    </ligand>
</feature>
<feature type="binding site" evidence="2">
    <location>
        <begin position="126"/>
        <end position="130"/>
    </location>
    <ligand>
        <name>GTP</name>
        <dbReference type="ChEBI" id="CHEBI:37565"/>
    </ligand>
</feature>
<feature type="binding site" evidence="2">
    <location>
        <begin position="180"/>
        <end position="183"/>
    </location>
    <ligand>
        <name>GTP</name>
        <dbReference type="ChEBI" id="CHEBI:37565"/>
    </ligand>
</feature>
<name>IF2_THET2</name>
<reference key="1">
    <citation type="journal article" date="2004" name="Nat. Biotechnol.">
        <title>The genome sequence of the extreme thermophile Thermus thermophilus.</title>
        <authorList>
            <person name="Henne A."/>
            <person name="Brueggemann H."/>
            <person name="Raasch C."/>
            <person name="Wiezer A."/>
            <person name="Hartsch T."/>
            <person name="Liesegang H."/>
            <person name="Johann A."/>
            <person name="Lienard T."/>
            <person name="Gohl O."/>
            <person name="Martinez-Arias R."/>
            <person name="Jacobi C."/>
            <person name="Starkuviene V."/>
            <person name="Schlenczeck S."/>
            <person name="Dencker S."/>
            <person name="Huber R."/>
            <person name="Klenk H.-P."/>
            <person name="Kramer W."/>
            <person name="Merkl R."/>
            <person name="Gottschalk G."/>
            <person name="Fritz H.-J."/>
        </authorList>
    </citation>
    <scope>NUCLEOTIDE SEQUENCE [LARGE SCALE GENOMIC DNA]</scope>
    <source>
        <strain>ATCC BAA-163 / DSM 7039 / HB27</strain>
    </source>
</reference>
<protein>
    <recommendedName>
        <fullName evidence="2">Translation initiation factor IF-2</fullName>
    </recommendedName>
</protein>
<organism>
    <name type="scientific">Thermus thermophilus (strain ATCC BAA-163 / DSM 7039 / HB27)</name>
    <dbReference type="NCBI Taxonomy" id="262724"/>
    <lineage>
        <taxon>Bacteria</taxon>
        <taxon>Thermotogati</taxon>
        <taxon>Deinococcota</taxon>
        <taxon>Deinococci</taxon>
        <taxon>Thermales</taxon>
        <taxon>Thermaceae</taxon>
        <taxon>Thermus</taxon>
    </lineage>
</organism>
<accession>Q72KE8</accession>